<organism>
    <name type="scientific">Anaeromyxobacter sp. (strain K)</name>
    <dbReference type="NCBI Taxonomy" id="447217"/>
    <lineage>
        <taxon>Bacteria</taxon>
        <taxon>Pseudomonadati</taxon>
        <taxon>Myxococcota</taxon>
        <taxon>Myxococcia</taxon>
        <taxon>Myxococcales</taxon>
        <taxon>Cystobacterineae</taxon>
        <taxon>Anaeromyxobacteraceae</taxon>
        <taxon>Anaeromyxobacter</taxon>
    </lineage>
</organism>
<sequence length="97" mass="10646">MALSLEEVRRIAVLARLRLSEEEERTFAGQLSAILDHVRQLEELDVTAVEPMTHALAAGELPARREDAVFPSLTPEEATAAAPAREGTAFKVPRIIE</sequence>
<keyword id="KW-0067">ATP-binding</keyword>
<keyword id="KW-0436">Ligase</keyword>
<keyword id="KW-0547">Nucleotide-binding</keyword>
<keyword id="KW-0648">Protein biosynthesis</keyword>
<name>GATC_ANASK</name>
<gene>
    <name evidence="1" type="primary">gatC</name>
    <name type="ordered locus">AnaeK_4321</name>
</gene>
<protein>
    <recommendedName>
        <fullName evidence="1">Aspartyl/glutamyl-tRNA(Asn/Gln) amidotransferase subunit C</fullName>
        <shortName evidence="1">Asp/Glu-ADT subunit C</shortName>
        <ecNumber evidence="1">6.3.5.-</ecNumber>
    </recommendedName>
</protein>
<evidence type="ECO:0000255" key="1">
    <source>
        <dbReference type="HAMAP-Rule" id="MF_00122"/>
    </source>
</evidence>
<reference key="1">
    <citation type="submission" date="2008-08" db="EMBL/GenBank/DDBJ databases">
        <title>Complete sequence of Anaeromyxobacter sp. K.</title>
        <authorList>
            <consortium name="US DOE Joint Genome Institute"/>
            <person name="Lucas S."/>
            <person name="Copeland A."/>
            <person name="Lapidus A."/>
            <person name="Glavina del Rio T."/>
            <person name="Dalin E."/>
            <person name="Tice H."/>
            <person name="Bruce D."/>
            <person name="Goodwin L."/>
            <person name="Pitluck S."/>
            <person name="Saunders E."/>
            <person name="Brettin T."/>
            <person name="Detter J.C."/>
            <person name="Han C."/>
            <person name="Larimer F."/>
            <person name="Land M."/>
            <person name="Hauser L."/>
            <person name="Kyrpides N."/>
            <person name="Ovchinnikiva G."/>
            <person name="Beliaev A."/>
        </authorList>
    </citation>
    <scope>NUCLEOTIDE SEQUENCE [LARGE SCALE GENOMIC DNA]</scope>
    <source>
        <strain>K</strain>
    </source>
</reference>
<feature type="chain" id="PRO_1000095259" description="Aspartyl/glutamyl-tRNA(Asn/Gln) amidotransferase subunit C">
    <location>
        <begin position="1"/>
        <end position="97"/>
    </location>
</feature>
<dbReference type="EC" id="6.3.5.-" evidence="1"/>
<dbReference type="EMBL" id="CP001131">
    <property type="protein sequence ID" value="ACG75524.1"/>
    <property type="molecule type" value="Genomic_DNA"/>
</dbReference>
<dbReference type="RefSeq" id="WP_012528275.1">
    <property type="nucleotide sequence ID" value="NC_011145.1"/>
</dbReference>
<dbReference type="SMR" id="B4UIV2"/>
<dbReference type="KEGG" id="ank:AnaeK_4321"/>
<dbReference type="HOGENOM" id="CLU_105899_2_0_7"/>
<dbReference type="OrthoDB" id="9813938at2"/>
<dbReference type="Proteomes" id="UP000001871">
    <property type="component" value="Chromosome"/>
</dbReference>
<dbReference type="GO" id="GO:0050566">
    <property type="term" value="F:asparaginyl-tRNA synthase (glutamine-hydrolyzing) activity"/>
    <property type="evidence" value="ECO:0007669"/>
    <property type="project" value="RHEA"/>
</dbReference>
<dbReference type="GO" id="GO:0005524">
    <property type="term" value="F:ATP binding"/>
    <property type="evidence" value="ECO:0007669"/>
    <property type="project" value="UniProtKB-KW"/>
</dbReference>
<dbReference type="GO" id="GO:0050567">
    <property type="term" value="F:glutaminyl-tRNA synthase (glutamine-hydrolyzing) activity"/>
    <property type="evidence" value="ECO:0007669"/>
    <property type="project" value="UniProtKB-UniRule"/>
</dbReference>
<dbReference type="GO" id="GO:0070681">
    <property type="term" value="P:glutaminyl-tRNAGln biosynthesis via transamidation"/>
    <property type="evidence" value="ECO:0007669"/>
    <property type="project" value="TreeGrafter"/>
</dbReference>
<dbReference type="GO" id="GO:0006450">
    <property type="term" value="P:regulation of translational fidelity"/>
    <property type="evidence" value="ECO:0007669"/>
    <property type="project" value="InterPro"/>
</dbReference>
<dbReference type="GO" id="GO:0006412">
    <property type="term" value="P:translation"/>
    <property type="evidence" value="ECO:0007669"/>
    <property type="project" value="UniProtKB-UniRule"/>
</dbReference>
<dbReference type="Gene3D" id="1.10.20.60">
    <property type="entry name" value="Glu-tRNAGln amidotransferase C subunit, N-terminal domain"/>
    <property type="match status" value="1"/>
</dbReference>
<dbReference type="HAMAP" id="MF_00122">
    <property type="entry name" value="GatC"/>
    <property type="match status" value="1"/>
</dbReference>
<dbReference type="InterPro" id="IPR036113">
    <property type="entry name" value="Asp/Glu-ADT_sf_sub_c"/>
</dbReference>
<dbReference type="InterPro" id="IPR003837">
    <property type="entry name" value="GatC"/>
</dbReference>
<dbReference type="NCBIfam" id="TIGR00135">
    <property type="entry name" value="gatC"/>
    <property type="match status" value="1"/>
</dbReference>
<dbReference type="PANTHER" id="PTHR15004">
    <property type="entry name" value="GLUTAMYL-TRNA(GLN) AMIDOTRANSFERASE SUBUNIT C, MITOCHONDRIAL"/>
    <property type="match status" value="1"/>
</dbReference>
<dbReference type="PANTHER" id="PTHR15004:SF0">
    <property type="entry name" value="GLUTAMYL-TRNA(GLN) AMIDOTRANSFERASE SUBUNIT C, MITOCHONDRIAL"/>
    <property type="match status" value="1"/>
</dbReference>
<dbReference type="Pfam" id="PF02686">
    <property type="entry name" value="GatC"/>
    <property type="match status" value="1"/>
</dbReference>
<dbReference type="SUPFAM" id="SSF141000">
    <property type="entry name" value="Glu-tRNAGln amidotransferase C subunit"/>
    <property type="match status" value="1"/>
</dbReference>
<proteinExistence type="inferred from homology"/>
<comment type="function">
    <text evidence="1">Allows the formation of correctly charged Asn-tRNA(Asn) or Gln-tRNA(Gln) through the transamidation of misacylated Asp-tRNA(Asn) or Glu-tRNA(Gln) in organisms which lack either or both of asparaginyl-tRNA or glutaminyl-tRNA synthetases. The reaction takes place in the presence of glutamine and ATP through an activated phospho-Asp-tRNA(Asn) or phospho-Glu-tRNA(Gln).</text>
</comment>
<comment type="catalytic activity">
    <reaction evidence="1">
        <text>L-glutamyl-tRNA(Gln) + L-glutamine + ATP + H2O = L-glutaminyl-tRNA(Gln) + L-glutamate + ADP + phosphate + H(+)</text>
        <dbReference type="Rhea" id="RHEA:17521"/>
        <dbReference type="Rhea" id="RHEA-COMP:9681"/>
        <dbReference type="Rhea" id="RHEA-COMP:9684"/>
        <dbReference type="ChEBI" id="CHEBI:15377"/>
        <dbReference type="ChEBI" id="CHEBI:15378"/>
        <dbReference type="ChEBI" id="CHEBI:29985"/>
        <dbReference type="ChEBI" id="CHEBI:30616"/>
        <dbReference type="ChEBI" id="CHEBI:43474"/>
        <dbReference type="ChEBI" id="CHEBI:58359"/>
        <dbReference type="ChEBI" id="CHEBI:78520"/>
        <dbReference type="ChEBI" id="CHEBI:78521"/>
        <dbReference type="ChEBI" id="CHEBI:456216"/>
    </reaction>
</comment>
<comment type="catalytic activity">
    <reaction evidence="1">
        <text>L-aspartyl-tRNA(Asn) + L-glutamine + ATP + H2O = L-asparaginyl-tRNA(Asn) + L-glutamate + ADP + phosphate + 2 H(+)</text>
        <dbReference type="Rhea" id="RHEA:14513"/>
        <dbReference type="Rhea" id="RHEA-COMP:9674"/>
        <dbReference type="Rhea" id="RHEA-COMP:9677"/>
        <dbReference type="ChEBI" id="CHEBI:15377"/>
        <dbReference type="ChEBI" id="CHEBI:15378"/>
        <dbReference type="ChEBI" id="CHEBI:29985"/>
        <dbReference type="ChEBI" id="CHEBI:30616"/>
        <dbReference type="ChEBI" id="CHEBI:43474"/>
        <dbReference type="ChEBI" id="CHEBI:58359"/>
        <dbReference type="ChEBI" id="CHEBI:78515"/>
        <dbReference type="ChEBI" id="CHEBI:78516"/>
        <dbReference type="ChEBI" id="CHEBI:456216"/>
    </reaction>
</comment>
<comment type="subunit">
    <text evidence="1">Heterotrimer of A, B and C subunits.</text>
</comment>
<comment type="similarity">
    <text evidence="1">Belongs to the GatC family.</text>
</comment>
<accession>B4UIV2</accession>